<sequence length="166" mass="18935">MISDESDRFNPRDPKPADAGKPSKSAKRREARQLATQALYQWHMARQSLNEIEAQFRVDNDFTDVDGAYFREILHGVPQFKTEIDNALTPCLDLAIEELDPVELAVLRLSTWELLKRVDVPYRVVINEGIELAKVFGSTDGHKFVNGVLDKLAPRLREAEVKAFKR</sequence>
<name>NUSB_PSEPF</name>
<comment type="function">
    <text evidence="1">Involved in transcription antitermination. Required for transcription of ribosomal RNA (rRNA) genes. Binds specifically to the boxA antiterminator sequence of the ribosomal RNA (rrn) operons.</text>
</comment>
<comment type="similarity">
    <text evidence="1">Belongs to the NusB family.</text>
</comment>
<keyword id="KW-0694">RNA-binding</keyword>
<keyword id="KW-0804">Transcription</keyword>
<keyword id="KW-0889">Transcription antitermination</keyword>
<keyword id="KW-0805">Transcription regulation</keyword>
<evidence type="ECO:0000255" key="1">
    <source>
        <dbReference type="HAMAP-Rule" id="MF_00073"/>
    </source>
</evidence>
<evidence type="ECO:0000256" key="2">
    <source>
        <dbReference type="SAM" id="MobiDB-lite"/>
    </source>
</evidence>
<accession>Q3K652</accession>
<reference key="1">
    <citation type="journal article" date="2009" name="Genome Biol.">
        <title>Genomic and genetic analyses of diversity and plant interactions of Pseudomonas fluorescens.</title>
        <authorList>
            <person name="Silby M.W."/>
            <person name="Cerdeno-Tarraga A.M."/>
            <person name="Vernikos G.S."/>
            <person name="Giddens S.R."/>
            <person name="Jackson R.W."/>
            <person name="Preston G.M."/>
            <person name="Zhang X.-X."/>
            <person name="Moon C.D."/>
            <person name="Gehrig S.M."/>
            <person name="Godfrey S.A.C."/>
            <person name="Knight C.G."/>
            <person name="Malone J.G."/>
            <person name="Robinson Z."/>
            <person name="Spiers A.J."/>
            <person name="Harris S."/>
            <person name="Challis G.L."/>
            <person name="Yaxley A.M."/>
            <person name="Harris D."/>
            <person name="Seeger K."/>
            <person name="Murphy L."/>
            <person name="Rutter S."/>
            <person name="Squares R."/>
            <person name="Quail M.A."/>
            <person name="Saunders E."/>
            <person name="Mavromatis K."/>
            <person name="Brettin T.S."/>
            <person name="Bentley S.D."/>
            <person name="Hothersall J."/>
            <person name="Stephens E."/>
            <person name="Thomas C.M."/>
            <person name="Parkhill J."/>
            <person name="Levy S.B."/>
            <person name="Rainey P.B."/>
            <person name="Thomson N.R."/>
        </authorList>
    </citation>
    <scope>NUCLEOTIDE SEQUENCE [LARGE SCALE GENOMIC DNA]</scope>
    <source>
        <strain>Pf0-1</strain>
    </source>
</reference>
<gene>
    <name evidence="1" type="primary">nusB</name>
    <name type="ordered locus">Pfl01_5015</name>
</gene>
<dbReference type="EMBL" id="CP000094">
    <property type="protein sequence ID" value="ABA76752.1"/>
    <property type="molecule type" value="Genomic_DNA"/>
</dbReference>
<dbReference type="RefSeq" id="WP_007955566.1">
    <property type="nucleotide sequence ID" value="NC_007492.2"/>
</dbReference>
<dbReference type="SMR" id="Q3K652"/>
<dbReference type="KEGG" id="pfo:Pfl01_5015"/>
<dbReference type="eggNOG" id="COG0781">
    <property type="taxonomic scope" value="Bacteria"/>
</dbReference>
<dbReference type="HOGENOM" id="CLU_087843_4_1_6"/>
<dbReference type="Proteomes" id="UP000002704">
    <property type="component" value="Chromosome"/>
</dbReference>
<dbReference type="GO" id="GO:0005829">
    <property type="term" value="C:cytosol"/>
    <property type="evidence" value="ECO:0007669"/>
    <property type="project" value="TreeGrafter"/>
</dbReference>
<dbReference type="GO" id="GO:0003723">
    <property type="term" value="F:RNA binding"/>
    <property type="evidence" value="ECO:0007669"/>
    <property type="project" value="UniProtKB-UniRule"/>
</dbReference>
<dbReference type="GO" id="GO:0006353">
    <property type="term" value="P:DNA-templated transcription termination"/>
    <property type="evidence" value="ECO:0007669"/>
    <property type="project" value="UniProtKB-UniRule"/>
</dbReference>
<dbReference type="GO" id="GO:0031564">
    <property type="term" value="P:transcription antitermination"/>
    <property type="evidence" value="ECO:0007669"/>
    <property type="project" value="UniProtKB-KW"/>
</dbReference>
<dbReference type="FunFam" id="1.10.940.10:FF:000001">
    <property type="entry name" value="Transcription antitermination factor NusB"/>
    <property type="match status" value="1"/>
</dbReference>
<dbReference type="Gene3D" id="1.10.940.10">
    <property type="entry name" value="NusB-like"/>
    <property type="match status" value="1"/>
</dbReference>
<dbReference type="HAMAP" id="MF_00073">
    <property type="entry name" value="NusB"/>
    <property type="match status" value="1"/>
</dbReference>
<dbReference type="InterPro" id="IPR035926">
    <property type="entry name" value="NusB-like_sf"/>
</dbReference>
<dbReference type="InterPro" id="IPR011605">
    <property type="entry name" value="NusB_fam"/>
</dbReference>
<dbReference type="InterPro" id="IPR006027">
    <property type="entry name" value="NusB_RsmB_TIM44"/>
</dbReference>
<dbReference type="NCBIfam" id="TIGR01951">
    <property type="entry name" value="nusB"/>
    <property type="match status" value="1"/>
</dbReference>
<dbReference type="PANTHER" id="PTHR11078:SF3">
    <property type="entry name" value="ANTITERMINATION NUSB DOMAIN-CONTAINING PROTEIN"/>
    <property type="match status" value="1"/>
</dbReference>
<dbReference type="PANTHER" id="PTHR11078">
    <property type="entry name" value="N UTILIZATION SUBSTANCE PROTEIN B-RELATED"/>
    <property type="match status" value="1"/>
</dbReference>
<dbReference type="Pfam" id="PF01029">
    <property type="entry name" value="NusB"/>
    <property type="match status" value="1"/>
</dbReference>
<dbReference type="SUPFAM" id="SSF48013">
    <property type="entry name" value="NusB-like"/>
    <property type="match status" value="1"/>
</dbReference>
<organism>
    <name type="scientific">Pseudomonas fluorescens (strain Pf0-1)</name>
    <dbReference type="NCBI Taxonomy" id="205922"/>
    <lineage>
        <taxon>Bacteria</taxon>
        <taxon>Pseudomonadati</taxon>
        <taxon>Pseudomonadota</taxon>
        <taxon>Gammaproteobacteria</taxon>
        <taxon>Pseudomonadales</taxon>
        <taxon>Pseudomonadaceae</taxon>
        <taxon>Pseudomonas</taxon>
    </lineage>
</organism>
<protein>
    <recommendedName>
        <fullName evidence="1">Transcription antitermination protein NusB</fullName>
    </recommendedName>
    <alternativeName>
        <fullName evidence="1">Antitermination factor NusB</fullName>
    </alternativeName>
</protein>
<feature type="chain" id="PRO_0000265564" description="Transcription antitermination protein NusB">
    <location>
        <begin position="1"/>
        <end position="166"/>
    </location>
</feature>
<feature type="region of interest" description="Disordered" evidence="2">
    <location>
        <begin position="1"/>
        <end position="30"/>
    </location>
</feature>
<feature type="compositionally biased region" description="Basic and acidic residues" evidence="2">
    <location>
        <begin position="1"/>
        <end position="18"/>
    </location>
</feature>
<proteinExistence type="inferred from homology"/>